<comment type="function">
    <text evidence="3">Shared alpha chain of the active heterodimeric glycoprotein hormones thyrotropin/thyroid stimulating hormone/TSH, lutropin/luteinizing hormone/LH, follitropin/follicle stimulating hormone/FSH and choriogonadotropin/CG. These hormones bind specific receptors on target cells that in turn activate downstream signaling pathways.</text>
</comment>
<comment type="subunit">
    <text evidence="2">Heterodimer. The active hormones thyrotropin, lutropin, follitropin and choriogonadotropin are heterodimers composed of CGA, a common alpha chain described here and a unique beta chain which confers their biological specificity to the hormones: TSHB for thyrotropin, LHB for lutropin, FSHB for follitropin and choriogonadotropin subunit beta/CGB for choriogonadotropin.</text>
</comment>
<comment type="subcellular location">
    <subcellularLocation>
        <location evidence="3">Secreted</location>
    </subcellularLocation>
</comment>
<comment type="similarity">
    <text evidence="4">Belongs to the glycoprotein hormones subunit alpha family.</text>
</comment>
<name>GLHA_MACFA</name>
<sequence>MDYYRKYAAVILVTLSVFLHILHSFPDGEFTMQDCPECKPRENKFFSKPGAPIYQCMGCCFSRAYPTPLRSKKTMLVQKNVTSESTCCVAKSLTRVMVMGNVRVENHTQCHCSTCYYHKF</sequence>
<protein>
    <recommendedName>
        <fullName>Glycoprotein hormones alpha chain</fullName>
    </recommendedName>
    <alternativeName>
        <fullName>Anterior pituitary glycoprotein hormones common subunit alpha</fullName>
    </alternativeName>
    <alternativeName>
        <fullName>Choriogonadotropin alpha chain</fullName>
    </alternativeName>
    <alternativeName>
        <fullName>Chorionic gonadotrophin subunit alpha</fullName>
        <shortName>CG-alpha</shortName>
    </alternativeName>
    <alternativeName>
        <fullName>Follicle-stimulating hormone alpha chain</fullName>
        <shortName>FSH-alpha</shortName>
    </alternativeName>
    <alternativeName>
        <fullName>Follitropin alpha chain</fullName>
    </alternativeName>
    <alternativeName>
        <fullName>Luteinizing hormone alpha chain</fullName>
        <shortName>LSH-alpha</shortName>
    </alternativeName>
    <alternativeName>
        <fullName>Lutropin alpha chain</fullName>
    </alternativeName>
    <alternativeName>
        <fullName>Thyroid-stimulating hormone alpha chain</fullName>
        <shortName>TSH-alpha</shortName>
    </alternativeName>
    <alternativeName>
        <fullName>Thyrotropin alpha chain</fullName>
    </alternativeName>
</protein>
<proteinExistence type="evidence at transcript level"/>
<feature type="signal peptide" evidence="1">
    <location>
        <begin position="1"/>
        <end position="24"/>
    </location>
</feature>
<feature type="chain" id="PRO_0000011641" description="Glycoprotein hormones alpha chain">
    <location>
        <begin position="25"/>
        <end position="120"/>
    </location>
</feature>
<feature type="glycosylation site" description="N-linked (GlcNAc...) asparagine" evidence="2">
    <location>
        <position position="80"/>
    </location>
</feature>
<feature type="glycosylation site" description="N-linked (GlcNAc...) asparagine" evidence="2">
    <location>
        <position position="106"/>
    </location>
</feature>
<feature type="disulfide bond" evidence="2">
    <location>
        <begin position="35"/>
        <end position="59"/>
    </location>
</feature>
<feature type="disulfide bond" evidence="2">
    <location>
        <begin position="38"/>
        <end position="88"/>
    </location>
</feature>
<feature type="disulfide bond" evidence="2">
    <location>
        <begin position="56"/>
        <end position="110"/>
    </location>
</feature>
<feature type="disulfide bond" evidence="2">
    <location>
        <begin position="60"/>
        <end position="112"/>
    </location>
</feature>
<feature type="disulfide bond" evidence="2">
    <location>
        <begin position="87"/>
        <end position="115"/>
    </location>
</feature>
<keyword id="KW-1015">Disulfide bond</keyword>
<keyword id="KW-0325">Glycoprotein</keyword>
<keyword id="KW-0372">Hormone</keyword>
<keyword id="KW-1185">Reference proteome</keyword>
<keyword id="KW-0964">Secreted</keyword>
<keyword id="KW-0732">Signal</keyword>
<reference key="1">
    <citation type="journal article" date="2002" name="Am. J. Primatol.">
        <title>Comparison of chorionic gonadotropin expression in human and macaque (Macaca fascicularis) trophoblasts.</title>
        <authorList>
            <person name="Wilken J.A."/>
            <person name="Matsumoto K."/>
            <person name="Laughlin L.S."/>
            <person name="Lasley B.L."/>
            <person name="Bedows E."/>
        </authorList>
    </citation>
    <scope>NUCLEOTIDE SEQUENCE [MRNA]</scope>
    <source>
        <tissue>Trophoblast</tissue>
    </source>
</reference>
<reference key="2">
    <citation type="journal article" date="1999" name="Mol. Cell. Endocrinol.">
        <title>Cloning and expression of cynomolgus monkey (Macaca fascicularis) gonadotropins luteinizing hormone and follicle-stimulating hormone and identification of two polymorphic sites in the luteinizing hormone beta subunit.</title>
        <authorList>
            <person name="Schmidt A."/>
            <person name="Gromoll J."/>
            <person name="Weinbauer G.F."/>
            <person name="Galla H.J."/>
            <person name="Chappel S."/>
            <person name="Simoni M."/>
        </authorList>
    </citation>
    <scope>NUCLEOTIDE SEQUENCE [MRNA]</scope>
    <scope>FUNCTION</scope>
    <scope>SUBCELLULAR LOCATION</scope>
    <source>
        <tissue>Pituitary</tissue>
    </source>
</reference>
<evidence type="ECO:0000250" key="1"/>
<evidence type="ECO:0000250" key="2">
    <source>
        <dbReference type="UniProtKB" id="P01215"/>
    </source>
</evidence>
<evidence type="ECO:0000269" key="3">
    <source>
    </source>
</evidence>
<evidence type="ECO:0000305" key="4"/>
<gene>
    <name type="primary">CGA</name>
</gene>
<dbReference type="EMBL" id="AY026358">
    <property type="protein sequence ID" value="AAK08642.1"/>
    <property type="molecule type" value="mRNA"/>
</dbReference>
<dbReference type="EMBL" id="AJ781394">
    <property type="protein sequence ID" value="CAH03728.1"/>
    <property type="molecule type" value="mRNA"/>
</dbReference>
<dbReference type="RefSeq" id="NP_001271473.1">
    <property type="nucleotide sequence ID" value="NM_001284544.1"/>
</dbReference>
<dbReference type="RefSeq" id="XP_015304325.1">
    <property type="nucleotide sequence ID" value="XM_015448839.3"/>
</dbReference>
<dbReference type="SMR" id="Q9BEH3"/>
<dbReference type="STRING" id="9541.ENSMFAP00000036878"/>
<dbReference type="GlyCosmos" id="Q9BEH3">
    <property type="glycosylation" value="2 sites, No reported glycans"/>
</dbReference>
<dbReference type="GeneID" id="102138376"/>
<dbReference type="KEGG" id="mcf:102138376"/>
<dbReference type="CTD" id="1081"/>
<dbReference type="VEuPathDB" id="HostDB:ENSMFAG00000037707"/>
<dbReference type="OMA" id="VKNHTDC"/>
<dbReference type="OrthoDB" id="357at314294"/>
<dbReference type="Proteomes" id="UP000233100">
    <property type="component" value="Chromosome 4"/>
</dbReference>
<dbReference type="GO" id="GO:0005615">
    <property type="term" value="C:extracellular space"/>
    <property type="evidence" value="ECO:0000314"/>
    <property type="project" value="UniProtKB"/>
</dbReference>
<dbReference type="GO" id="GO:0016914">
    <property type="term" value="C:follicle-stimulating hormone complex"/>
    <property type="evidence" value="ECO:0000314"/>
    <property type="project" value="UniProtKB"/>
</dbReference>
<dbReference type="GO" id="GO:0016913">
    <property type="term" value="F:follicle-stimulating hormone activity"/>
    <property type="evidence" value="ECO:0000314"/>
    <property type="project" value="UniProtKB"/>
</dbReference>
<dbReference type="GO" id="GO:0042699">
    <property type="term" value="P:follicle-stimulating hormone signaling pathway"/>
    <property type="evidence" value="ECO:0000314"/>
    <property type="project" value="UniProtKB"/>
</dbReference>
<dbReference type="GO" id="GO:0007186">
    <property type="term" value="P:G protein-coupled receptor signaling pathway"/>
    <property type="evidence" value="ECO:0000314"/>
    <property type="project" value="UniProtKB"/>
</dbReference>
<dbReference type="GO" id="GO:0010893">
    <property type="term" value="P:positive regulation of steroid biosynthetic process"/>
    <property type="evidence" value="ECO:0000250"/>
    <property type="project" value="UniProtKB"/>
</dbReference>
<dbReference type="GO" id="GO:0010469">
    <property type="term" value="P:regulation of signaling receptor activity"/>
    <property type="evidence" value="ECO:0000314"/>
    <property type="project" value="UniProtKB"/>
</dbReference>
<dbReference type="GO" id="GO:0006590">
    <property type="term" value="P:thyroid hormone generation"/>
    <property type="evidence" value="ECO:0007669"/>
    <property type="project" value="TreeGrafter"/>
</dbReference>
<dbReference type="FunFam" id="2.10.90.10:FF:000011">
    <property type="entry name" value="Glycoprotein hormones alpha chain"/>
    <property type="match status" value="1"/>
</dbReference>
<dbReference type="Gene3D" id="2.10.90.10">
    <property type="entry name" value="Cystine-knot cytokines"/>
    <property type="match status" value="1"/>
</dbReference>
<dbReference type="InterPro" id="IPR029034">
    <property type="entry name" value="Cystine-knot_cytokine"/>
</dbReference>
<dbReference type="InterPro" id="IPR000476">
    <property type="entry name" value="Glyco_hormone"/>
</dbReference>
<dbReference type="PANTHER" id="PTHR11509">
    <property type="entry name" value="GLYCOPROTEIN HORMONE ALPHA CHAIN"/>
    <property type="match status" value="1"/>
</dbReference>
<dbReference type="PANTHER" id="PTHR11509:SF0">
    <property type="entry name" value="GLYCOPROTEIN HORMONES ALPHA CHAIN"/>
    <property type="match status" value="1"/>
</dbReference>
<dbReference type="Pfam" id="PF00236">
    <property type="entry name" value="Hormone_6"/>
    <property type="match status" value="1"/>
</dbReference>
<dbReference type="PRINTS" id="PR00274">
    <property type="entry name" value="GLYCOHORMONE"/>
</dbReference>
<dbReference type="SMART" id="SM00067">
    <property type="entry name" value="GHA"/>
    <property type="match status" value="1"/>
</dbReference>
<dbReference type="SUPFAM" id="SSF57501">
    <property type="entry name" value="Cystine-knot cytokines"/>
    <property type="match status" value="1"/>
</dbReference>
<dbReference type="PROSITE" id="PS00779">
    <property type="entry name" value="GLYCO_HORMONE_ALPHA_1"/>
    <property type="match status" value="1"/>
</dbReference>
<dbReference type="PROSITE" id="PS00780">
    <property type="entry name" value="GLYCO_HORMONE_ALPHA_2"/>
    <property type="match status" value="1"/>
</dbReference>
<dbReference type="PROSITE" id="PS50277">
    <property type="entry name" value="GLYCO_HORMONE_ALPHA_3"/>
    <property type="match status" value="1"/>
</dbReference>
<organism>
    <name type="scientific">Macaca fascicularis</name>
    <name type="common">Crab-eating macaque</name>
    <name type="synonym">Cynomolgus monkey</name>
    <dbReference type="NCBI Taxonomy" id="9541"/>
    <lineage>
        <taxon>Eukaryota</taxon>
        <taxon>Metazoa</taxon>
        <taxon>Chordata</taxon>
        <taxon>Craniata</taxon>
        <taxon>Vertebrata</taxon>
        <taxon>Euteleostomi</taxon>
        <taxon>Mammalia</taxon>
        <taxon>Eutheria</taxon>
        <taxon>Euarchontoglires</taxon>
        <taxon>Primates</taxon>
        <taxon>Haplorrhini</taxon>
        <taxon>Catarrhini</taxon>
        <taxon>Cercopithecidae</taxon>
        <taxon>Cercopithecinae</taxon>
        <taxon>Macaca</taxon>
    </lineage>
</organism>
<accession>Q9BEH3</accession>